<keyword id="KW-0386">Hypusine biosynthesis</keyword>
<keyword id="KW-0520">NAD</keyword>
<keyword id="KW-1185">Reference proteome</keyword>
<keyword id="KW-0808">Transferase</keyword>
<feature type="chain" id="PRO_0000134484" description="Deoxyhypusine synthase">
    <location>
        <begin position="1"/>
        <end position="379"/>
    </location>
</feature>
<feature type="active site" description="Nucleophile" evidence="1">
    <location>
        <position position="350"/>
    </location>
</feature>
<feature type="binding site" evidence="1">
    <location>
        <begin position="108"/>
        <end position="112"/>
    </location>
    <ligand>
        <name>NAD(+)</name>
        <dbReference type="ChEBI" id="CHEBI:57540"/>
    </ligand>
</feature>
<feature type="binding site" evidence="1">
    <location>
        <begin position="134"/>
        <end position="136"/>
    </location>
    <ligand>
        <name>NAD(+)</name>
        <dbReference type="ChEBI" id="CHEBI:57540"/>
    </ligand>
</feature>
<feature type="binding site" evidence="1">
    <location>
        <begin position="139"/>
        <end position="140"/>
    </location>
    <ligand>
        <name>spermidine</name>
        <dbReference type="ChEBI" id="CHEBI:57834"/>
    </ligand>
</feature>
<feature type="binding site" evidence="1">
    <location>
        <position position="140"/>
    </location>
    <ligand>
        <name>NAD(+)</name>
        <dbReference type="ChEBI" id="CHEBI:57540"/>
    </ligand>
</feature>
<feature type="binding site" evidence="1">
    <location>
        <position position="257"/>
    </location>
    <ligand>
        <name>NAD(+)</name>
        <dbReference type="ChEBI" id="CHEBI:57540"/>
    </ligand>
</feature>
<feature type="binding site" evidence="1">
    <location>
        <position position="262"/>
    </location>
    <ligand>
        <name>spermidine</name>
        <dbReference type="ChEBI" id="CHEBI:57834"/>
    </ligand>
</feature>
<feature type="binding site" evidence="1">
    <location>
        <position position="304"/>
    </location>
    <ligand>
        <name>NAD(+)</name>
        <dbReference type="ChEBI" id="CHEBI:57540"/>
    </ligand>
</feature>
<feature type="binding site" evidence="1">
    <location>
        <position position="309"/>
    </location>
    <ligand>
        <name>spermidine</name>
        <dbReference type="ChEBI" id="CHEBI:57834"/>
    </ligand>
</feature>
<feature type="binding site" evidence="1">
    <location>
        <begin position="329"/>
        <end position="330"/>
    </location>
    <ligand>
        <name>NAD(+)</name>
        <dbReference type="ChEBI" id="CHEBI:57540"/>
    </ligand>
</feature>
<feature type="binding site" evidence="1">
    <location>
        <begin position="335"/>
        <end position="337"/>
    </location>
    <ligand>
        <name>spermidine</name>
        <dbReference type="ChEBI" id="CHEBI:57834"/>
    </ligand>
</feature>
<feature type="binding site" evidence="1">
    <location>
        <begin position="344"/>
        <end position="350"/>
    </location>
    <ligand>
        <name>spermidine</name>
        <dbReference type="ChEBI" id="CHEBI:57834"/>
    </ligand>
</feature>
<feature type="binding site" evidence="1">
    <location>
        <begin position="363"/>
        <end position="364"/>
    </location>
    <ligand>
        <name>NAD(+)</name>
        <dbReference type="ChEBI" id="CHEBI:57540"/>
    </ligand>
</feature>
<name>DHYS_KLULA</name>
<sequence length="379" mass="42074">MSNIDGKLPDILSDAVLKQSVPVPDNFVKVEGIDYSKPESRNMRSKDLIKSMATMGFQASSLGKACDIIDEMRSWRGEHRDKLEEHDRKGSFDNDGYQKTTIFMGYTSNLISSGLRETLRFLVQNKMVDAIVATAGGVEEDIIKCLADTYLGEFSLPGKGLRDQGMNRIGNLLVPNDNYCKFEEWIVPILDKMLEEQENYVESQGKDCLDSNFDQDSPVWTPSKLIRRLGKEINDESSVLYWAYKNDIPIFCPAVTDGSIGDMLFFHTFKASPKQLRLDIVSDIRKINSMSMEASRAGMIILGGGLIKHHIANACLMRNGADYAVYINTGQEFDGSDAGARPDEAVSWGKIKADAKSVKVYADATVVFPLVVAATFASE</sequence>
<accession>Q6CNG7</accession>
<gene>
    <name type="primary">DYS1</name>
    <name type="ordered locus">KLLA0E12727g</name>
</gene>
<reference key="1">
    <citation type="journal article" date="2004" name="Nature">
        <title>Genome evolution in yeasts.</title>
        <authorList>
            <person name="Dujon B."/>
            <person name="Sherman D."/>
            <person name="Fischer G."/>
            <person name="Durrens P."/>
            <person name="Casaregola S."/>
            <person name="Lafontaine I."/>
            <person name="de Montigny J."/>
            <person name="Marck C."/>
            <person name="Neuveglise C."/>
            <person name="Talla E."/>
            <person name="Goffard N."/>
            <person name="Frangeul L."/>
            <person name="Aigle M."/>
            <person name="Anthouard V."/>
            <person name="Babour A."/>
            <person name="Barbe V."/>
            <person name="Barnay S."/>
            <person name="Blanchin S."/>
            <person name="Beckerich J.-M."/>
            <person name="Beyne E."/>
            <person name="Bleykasten C."/>
            <person name="Boisrame A."/>
            <person name="Boyer J."/>
            <person name="Cattolico L."/>
            <person name="Confanioleri F."/>
            <person name="de Daruvar A."/>
            <person name="Despons L."/>
            <person name="Fabre E."/>
            <person name="Fairhead C."/>
            <person name="Ferry-Dumazet H."/>
            <person name="Groppi A."/>
            <person name="Hantraye F."/>
            <person name="Hennequin C."/>
            <person name="Jauniaux N."/>
            <person name="Joyet P."/>
            <person name="Kachouri R."/>
            <person name="Kerrest A."/>
            <person name="Koszul R."/>
            <person name="Lemaire M."/>
            <person name="Lesur I."/>
            <person name="Ma L."/>
            <person name="Muller H."/>
            <person name="Nicaud J.-M."/>
            <person name="Nikolski M."/>
            <person name="Oztas S."/>
            <person name="Ozier-Kalogeropoulos O."/>
            <person name="Pellenz S."/>
            <person name="Potier S."/>
            <person name="Richard G.-F."/>
            <person name="Straub M.-L."/>
            <person name="Suleau A."/>
            <person name="Swennen D."/>
            <person name="Tekaia F."/>
            <person name="Wesolowski-Louvel M."/>
            <person name="Westhof E."/>
            <person name="Wirth B."/>
            <person name="Zeniou-Meyer M."/>
            <person name="Zivanovic Y."/>
            <person name="Bolotin-Fukuhara M."/>
            <person name="Thierry A."/>
            <person name="Bouchier C."/>
            <person name="Caudron B."/>
            <person name="Scarpelli C."/>
            <person name="Gaillardin C."/>
            <person name="Weissenbach J."/>
            <person name="Wincker P."/>
            <person name="Souciet J.-L."/>
        </authorList>
    </citation>
    <scope>NUCLEOTIDE SEQUENCE [LARGE SCALE GENOMIC DNA]</scope>
    <source>
        <strain>ATCC 8585 / CBS 2359 / DSM 70799 / NBRC 1267 / NRRL Y-1140 / WM37</strain>
    </source>
</reference>
<organism>
    <name type="scientific">Kluyveromyces lactis (strain ATCC 8585 / CBS 2359 / DSM 70799 / NBRC 1267 / NRRL Y-1140 / WM37)</name>
    <name type="common">Yeast</name>
    <name type="synonym">Candida sphaerica</name>
    <dbReference type="NCBI Taxonomy" id="284590"/>
    <lineage>
        <taxon>Eukaryota</taxon>
        <taxon>Fungi</taxon>
        <taxon>Dikarya</taxon>
        <taxon>Ascomycota</taxon>
        <taxon>Saccharomycotina</taxon>
        <taxon>Saccharomycetes</taxon>
        <taxon>Saccharomycetales</taxon>
        <taxon>Saccharomycetaceae</taxon>
        <taxon>Kluyveromyces</taxon>
    </lineage>
</organism>
<protein>
    <recommendedName>
        <fullName>Deoxyhypusine synthase</fullName>
        <shortName>DHS</shortName>
        <ecNumber>2.5.1.46</ecNumber>
    </recommendedName>
</protein>
<proteinExistence type="inferred from homology"/>
<comment type="function">
    <text evidence="1">Catalyzes the NAD-dependent oxidative cleavage of spermidine and the subsequent transfer of the butylamine moiety of spermidine to the epsilon-amino group of a specific lysine residue of the eIF-5A precursor protein to form the intermediate deoxyhypusine residue.</text>
</comment>
<comment type="catalytic activity">
    <reaction>
        <text>[eIF5A protein]-L-lysine + spermidine = [eIF5A protein]-deoxyhypusine + propane-1,3-diamine</text>
        <dbReference type="Rhea" id="RHEA:33299"/>
        <dbReference type="Rhea" id="RHEA-COMP:10143"/>
        <dbReference type="Rhea" id="RHEA-COMP:10144"/>
        <dbReference type="ChEBI" id="CHEBI:29969"/>
        <dbReference type="ChEBI" id="CHEBI:57484"/>
        <dbReference type="ChEBI" id="CHEBI:57834"/>
        <dbReference type="ChEBI" id="CHEBI:82657"/>
        <dbReference type="EC" id="2.5.1.46"/>
    </reaction>
</comment>
<comment type="cofactor">
    <cofactor evidence="1">
        <name>NAD(+)</name>
        <dbReference type="ChEBI" id="CHEBI:57540"/>
    </cofactor>
</comment>
<comment type="pathway">
    <text>Protein modification; eIF5A hypusination.</text>
</comment>
<comment type="similarity">
    <text evidence="2">Belongs to the deoxyhypusine synthase family.</text>
</comment>
<evidence type="ECO:0000250" key="1"/>
<evidence type="ECO:0000305" key="2"/>
<dbReference type="EC" id="2.5.1.46"/>
<dbReference type="EMBL" id="CR382125">
    <property type="protein sequence ID" value="CAG99609.1"/>
    <property type="molecule type" value="Genomic_DNA"/>
</dbReference>
<dbReference type="RefSeq" id="XP_454522.1">
    <property type="nucleotide sequence ID" value="XM_454522.1"/>
</dbReference>
<dbReference type="SMR" id="Q6CNG7"/>
<dbReference type="FunCoup" id="Q6CNG7">
    <property type="interactions" value="727"/>
</dbReference>
<dbReference type="STRING" id="284590.Q6CNG7"/>
<dbReference type="PaxDb" id="284590-Q6CNG7"/>
<dbReference type="KEGG" id="kla:KLLA0_E12695g"/>
<dbReference type="eggNOG" id="KOG2924">
    <property type="taxonomic scope" value="Eukaryota"/>
</dbReference>
<dbReference type="HOGENOM" id="CLU_039781_0_0_1"/>
<dbReference type="InParanoid" id="Q6CNG7"/>
<dbReference type="OMA" id="HSIINAN"/>
<dbReference type="UniPathway" id="UPA00354"/>
<dbReference type="Proteomes" id="UP000000598">
    <property type="component" value="Chromosome E"/>
</dbReference>
<dbReference type="GO" id="GO:0005737">
    <property type="term" value="C:cytoplasm"/>
    <property type="evidence" value="ECO:0007669"/>
    <property type="project" value="TreeGrafter"/>
</dbReference>
<dbReference type="GO" id="GO:0034038">
    <property type="term" value="F:deoxyhypusine synthase activity"/>
    <property type="evidence" value="ECO:0007669"/>
    <property type="project" value="UniProtKB-EC"/>
</dbReference>
<dbReference type="FunFam" id="3.40.910.10:FF:000003">
    <property type="entry name" value="Deoxyhypusine synthase"/>
    <property type="match status" value="1"/>
</dbReference>
<dbReference type="Gene3D" id="3.40.910.10">
    <property type="entry name" value="Deoxyhypusine synthase"/>
    <property type="match status" value="1"/>
</dbReference>
<dbReference type="InterPro" id="IPR002773">
    <property type="entry name" value="Deoxyhypusine_synthase"/>
</dbReference>
<dbReference type="InterPro" id="IPR036982">
    <property type="entry name" value="Deoxyhypusine_synthase_sf"/>
</dbReference>
<dbReference type="InterPro" id="IPR029035">
    <property type="entry name" value="DHS-like_NAD/FAD-binding_dom"/>
</dbReference>
<dbReference type="NCBIfam" id="TIGR00321">
    <property type="entry name" value="dhys"/>
    <property type="match status" value="1"/>
</dbReference>
<dbReference type="PANTHER" id="PTHR11703">
    <property type="entry name" value="DEOXYHYPUSINE SYNTHASE"/>
    <property type="match status" value="1"/>
</dbReference>
<dbReference type="PANTHER" id="PTHR11703:SF0">
    <property type="entry name" value="DEOXYHYPUSINE SYNTHASE"/>
    <property type="match status" value="1"/>
</dbReference>
<dbReference type="Pfam" id="PF01916">
    <property type="entry name" value="DS"/>
    <property type="match status" value="1"/>
</dbReference>
<dbReference type="SUPFAM" id="SSF52467">
    <property type="entry name" value="DHS-like NAD/FAD-binding domain"/>
    <property type="match status" value="1"/>
</dbReference>